<protein>
    <recommendedName>
        <fullName evidence="10">Phospholipase DDHD1</fullName>
        <ecNumber evidence="1">3.1.1.111</ecNumber>
        <ecNumber evidence="2">3.1.1.32</ecNumber>
    </recommendedName>
    <alternativeName>
        <fullName>DDHD domain-containing protein 1</fullName>
    </alternativeName>
    <alternativeName>
        <fullName>Phosphatidic acid-preferring phospholipase A1</fullName>
        <shortName evidence="8">PA-PLA1</shortName>
        <ecNumber evidence="5 11 12">3.1.1.118</ecNumber>
    </alternativeName>
    <alternativeName>
        <fullName>Phospholipid sn-1 acylhydrolase</fullName>
    </alternativeName>
</protein>
<feature type="chain" id="PRO_0000079844" description="Phospholipase DDHD1">
    <location>
        <begin position="1"/>
        <end position="875"/>
    </location>
</feature>
<feature type="domain" description="DDHD" evidence="3">
    <location>
        <begin position="614"/>
        <end position="861"/>
    </location>
</feature>
<feature type="region of interest" description="Disordered" evidence="4">
    <location>
        <begin position="1"/>
        <end position="30"/>
    </location>
</feature>
<feature type="region of interest" description="Disordered" evidence="4">
    <location>
        <begin position="101"/>
        <end position="153"/>
    </location>
</feature>
<feature type="region of interest" description="Disordered" evidence="4">
    <location>
        <begin position="206"/>
        <end position="231"/>
    </location>
</feature>
<feature type="region of interest" description="Disordered" evidence="4">
    <location>
        <begin position="770"/>
        <end position="804"/>
    </location>
</feature>
<feature type="compositionally biased region" description="Gly residues" evidence="4">
    <location>
        <begin position="130"/>
        <end position="140"/>
    </location>
</feature>
<feature type="compositionally biased region" description="Low complexity" evidence="4">
    <location>
        <begin position="217"/>
        <end position="228"/>
    </location>
</feature>
<feature type="compositionally biased region" description="Basic and acidic residues" evidence="4">
    <location>
        <begin position="779"/>
        <end position="790"/>
    </location>
</feature>
<feature type="compositionally biased region" description="Polar residues" evidence="4">
    <location>
        <begin position="795"/>
        <end position="804"/>
    </location>
</feature>
<feature type="active site">
    <location>
        <position position="540"/>
    </location>
</feature>
<feature type="modified residue" description="Phosphoserine" evidence="2">
    <location>
        <position position="8"/>
    </location>
</feature>
<feature type="modified residue" description="Phosphoserine" evidence="2">
    <location>
        <position position="11"/>
    </location>
</feature>
<feature type="modified residue" description="Phosphoserine" evidence="1">
    <location>
        <position position="726"/>
    </location>
</feature>
<feature type="splice variant" id="VSP_008627" description="In isoform 2." evidence="9">
    <location>
        <begin position="343"/>
        <end position="382"/>
    </location>
</feature>
<feature type="mutagenesis site" description="Loss of function." evidence="7">
    <original>S</original>
    <variation>A</variation>
    <location>
        <position position="540"/>
    </location>
</feature>
<feature type="mutagenesis site" description="No effect." evidence="7">
    <original>S</original>
    <variation>A</variation>
    <location>
        <position position="730"/>
    </location>
</feature>
<sequence>MNYPGHGSPRSSERNGGRGGDGAAWELGSDTEPAFGGSVCRFDHLPVGEPGDDEVPLALLRGEPGLHLAPGAEDHNHHLALDPCLSDDNYDFSSAESGSSLRYYSEGESGGGGSSSSLHPPQQPLVPSNSGGGGAAGGGPGERKRTRPGGAAARHRYEVVTELGPEEVRWFYKEDKKTWKPFIGYDSLRIELAFRTLLQATGARARAQDPDGDHVCGPASPAGPASSSVEDEDEDRVCGFCPRIAGHGREMEELVNIERVCVRGGLYEVDVTQGECYPVYWNQSDKIPVMRGQWFIDGTWQPLEEEESNLIEQEHLSRFRGQQMQESFDIEVSKPIDGKDAIHSFKLSRNHVDWHSVDEVYLYSDATTSKIARTVTQKLGFSKASSSGTRLHRGYVEEATLEDKPSQTTHIVFVVHGIGQKMDQGRIIKNTAMMREAARKIEERHFSNHATHVEFLPVEWRSKLTLDGDTVDSITPDKVRGLRDMLNSSAMDIMYYTSPLYRDELVKGLQQELNRLYSLFCSRNPNFEEKGGKVSIVSHSLGCVITYDIMTGWNPVRLYEQLLQKEEELPDERWMSYEERHLLDELYITKRRLREIEERLHGLKASSMTQTPALKFKVENFFCMGSPLAVFLALRGIRPGNTGSQDHILPREICNRLLNIFHPTDPVAYRLEPLILKHYSNISPVQIHWYNTSNPLPYEYMKPSFLHPAKDPTSISENEGISTIPSPVTSPVLSRRHYGESITNIGKASILGAASIGKGLGGMLFSRFGRSSASQPSETSRDSIEDEKKPVASPPMTTVATQTLPHSSSGFLDSALELDHRIDFELREGLVESRYWSAVTSHTAYWSSLDVALFLLTFMYKHEHDNNVKPSLDPV</sequence>
<name>DDHD1_BOVIN</name>
<dbReference type="EC" id="3.1.1.111" evidence="1"/>
<dbReference type="EC" id="3.1.1.32" evidence="2"/>
<dbReference type="EC" id="3.1.1.118" evidence="5 11 12"/>
<dbReference type="EMBL" id="AF045022">
    <property type="protein sequence ID" value="AAC03019.1"/>
    <property type="molecule type" value="mRNA"/>
</dbReference>
<dbReference type="RefSeq" id="NP_788816.1">
    <property type="nucleotide sequence ID" value="NM_176643.2"/>
</dbReference>
<dbReference type="FunCoup" id="O46606">
    <property type="interactions" value="1254"/>
</dbReference>
<dbReference type="STRING" id="9913.ENSBTAP00000070741"/>
<dbReference type="iPTMnet" id="O46606"/>
<dbReference type="PaxDb" id="9913-ENSBTAP00000026549"/>
<dbReference type="GeneID" id="338047"/>
<dbReference type="KEGG" id="bta:338047"/>
<dbReference type="CTD" id="80821"/>
<dbReference type="eggNOG" id="KOG2308">
    <property type="taxonomic scope" value="Eukaryota"/>
</dbReference>
<dbReference type="InParanoid" id="O46606"/>
<dbReference type="OrthoDB" id="431378at2759"/>
<dbReference type="BRENDA" id="3.1.1.118">
    <property type="organism ID" value="908"/>
</dbReference>
<dbReference type="UniPathway" id="UPA00949"/>
<dbReference type="Proteomes" id="UP000009136">
    <property type="component" value="Unplaced"/>
</dbReference>
<dbReference type="GO" id="GO:0005737">
    <property type="term" value="C:cytoplasm"/>
    <property type="evidence" value="ECO:0000318"/>
    <property type="project" value="GO_Central"/>
</dbReference>
<dbReference type="GO" id="GO:0046872">
    <property type="term" value="F:metal ion binding"/>
    <property type="evidence" value="ECO:0007669"/>
    <property type="project" value="InterPro"/>
</dbReference>
<dbReference type="GO" id="GO:0008970">
    <property type="term" value="F:phospholipase A1 activity"/>
    <property type="evidence" value="ECO:0007669"/>
    <property type="project" value="RHEA"/>
</dbReference>
<dbReference type="GO" id="GO:0004620">
    <property type="term" value="F:phospholipase activity"/>
    <property type="evidence" value="ECO:0000318"/>
    <property type="project" value="GO_Central"/>
</dbReference>
<dbReference type="GO" id="GO:0046488">
    <property type="term" value="P:phosphatidylinositol metabolic process"/>
    <property type="evidence" value="ECO:0007669"/>
    <property type="project" value="UniProtKB-UniPathway"/>
</dbReference>
<dbReference type="InterPro" id="IPR004177">
    <property type="entry name" value="DDHD_dom"/>
</dbReference>
<dbReference type="PANTHER" id="PTHR23509">
    <property type="entry name" value="PA-PL1 PHOSPHOLIPASE FAMILY"/>
    <property type="match status" value="1"/>
</dbReference>
<dbReference type="PANTHER" id="PTHR23509:SF32">
    <property type="entry name" value="PHOSPHOLIPASE DDHD1"/>
    <property type="match status" value="1"/>
</dbReference>
<dbReference type="Pfam" id="PF02862">
    <property type="entry name" value="DDHD"/>
    <property type="match status" value="1"/>
</dbReference>
<dbReference type="SMART" id="SM01127">
    <property type="entry name" value="DDHD"/>
    <property type="match status" value="1"/>
</dbReference>
<dbReference type="PROSITE" id="PS51043">
    <property type="entry name" value="DDHD"/>
    <property type="match status" value="1"/>
</dbReference>
<accession>O46606</accession>
<evidence type="ECO:0000250" key="1">
    <source>
        <dbReference type="UniProtKB" id="Q80YA3"/>
    </source>
</evidence>
<evidence type="ECO:0000250" key="2">
    <source>
        <dbReference type="UniProtKB" id="Q8NEL9"/>
    </source>
</evidence>
<evidence type="ECO:0000255" key="3">
    <source>
        <dbReference type="PROSITE-ProRule" id="PRU00378"/>
    </source>
</evidence>
<evidence type="ECO:0000256" key="4">
    <source>
        <dbReference type="SAM" id="MobiDB-lite"/>
    </source>
</evidence>
<evidence type="ECO:0000269" key="5">
    <source>
    </source>
</evidence>
<evidence type="ECO:0000269" key="6">
    <source>
    </source>
</evidence>
<evidence type="ECO:0000269" key="7">
    <source>
    </source>
</evidence>
<evidence type="ECO:0000303" key="8">
    <source>
    </source>
</evidence>
<evidence type="ECO:0000303" key="9">
    <source>
    </source>
</evidence>
<evidence type="ECO:0000305" key="10"/>
<evidence type="ECO:0000305" key="11">
    <source>
    </source>
</evidence>
<evidence type="ECO:0000305" key="12">
    <source>
    </source>
</evidence>
<reference key="1">
    <citation type="journal article" date="1998" name="J. Biol. Chem.">
        <title>Cloning of a phosphatidic acid-preferring phospholipase A1 from bovine testis.</title>
        <authorList>
            <person name="Higgs H.N."/>
            <person name="Han M.H."/>
            <person name="Johnson G.E."/>
            <person name="Glomset J.A."/>
        </authorList>
    </citation>
    <scope>NUCLEOTIDE SEQUENCE [MRNA] (ISOFORMS 1 AND 2)</scope>
    <scope>MASS SPECTROMETRY</scope>
    <scope>FUNCTION</scope>
    <scope>MUTAGENESIS OF SER-540 AND SER-730</scope>
    <source>
        <tissue>Testis</tissue>
    </source>
</reference>
<reference key="2">
    <citation type="journal article" date="1994" name="Proc. Natl. Acad. Sci. U.S.A.">
        <title>Identification of a phosphatidic acid-preferring phospholipase A1 from bovine brain and testis.</title>
        <authorList>
            <person name="Higgs H.N."/>
            <person name="Glomset J.A."/>
        </authorList>
    </citation>
    <scope>FUNCTION</scope>
    <scope>CATALYTIC ACTIVITY</scope>
</reference>
<reference key="3">
    <citation type="journal article" date="2000" name="Biochemistry">
        <title>Membrane lipids have multiple effects on interfacial catalysis by a phosphatidic acid-preferring phospholipase A1 from bovine testis.</title>
        <authorList>
            <person name="Lin Q."/>
            <person name="Higgs H.N."/>
            <person name="Glomset J.A."/>
        </authorList>
    </citation>
    <scope>FUNCTION</scope>
    <scope>CATALYTIC ACTIVITY</scope>
</reference>
<proteinExistence type="evidence at protein level"/>
<gene>
    <name type="primary">DDHD1</name>
</gene>
<organism>
    <name type="scientific">Bos taurus</name>
    <name type="common">Bovine</name>
    <dbReference type="NCBI Taxonomy" id="9913"/>
    <lineage>
        <taxon>Eukaryota</taxon>
        <taxon>Metazoa</taxon>
        <taxon>Chordata</taxon>
        <taxon>Craniata</taxon>
        <taxon>Vertebrata</taxon>
        <taxon>Euteleostomi</taxon>
        <taxon>Mammalia</taxon>
        <taxon>Eutheria</taxon>
        <taxon>Laurasiatheria</taxon>
        <taxon>Artiodactyla</taxon>
        <taxon>Ruminantia</taxon>
        <taxon>Pecora</taxon>
        <taxon>Bovidae</taxon>
        <taxon>Bovinae</taxon>
        <taxon>Bos</taxon>
    </lineage>
</organism>
<keyword id="KW-0025">Alternative splicing</keyword>
<keyword id="KW-0963">Cytoplasm</keyword>
<keyword id="KW-0378">Hydrolase</keyword>
<keyword id="KW-0443">Lipid metabolism</keyword>
<keyword id="KW-1208">Phospholipid metabolism</keyword>
<keyword id="KW-0597">Phosphoprotein</keyword>
<keyword id="KW-1185">Reference proteome</keyword>
<comment type="function">
    <text evidence="1 2 5 6 7 8">Phospholipase A1 (PLA1) that hydrolyzes ester bonds at the sn-1 position of glycerophospholipids producing a free fatty acid and a lysophospholipid (PubMed:10924127, PubMed:7937808, PubMed:9488669). Prefers phosphatidate (1,2-diacyl-sn-glycero-3-phosphate, PA) as substrate in vitro, but can efficiently hydrolyze phosphatidylinositol (1,2-diacyl-sn-glycero-3-phospho-(1D-myo-inositol), PI), as well as a range of other glycerophospholipid substrates such as phosphatidylcholine (1,2-diacyl-sn-glycero-3-phosphocholine, PC), phosphatidylethanolamine (1,2-diacyl-sn-glycero-3-phosphoethanolamine, PE), phosphatidylserine (1,2-diacyl-sn-glycero-3-phospho-L-serine, PS) and phosphatidylglycerol (1,2-diacyl-sn-glycero-3-phospho-(1'-sn-glycerol), PG) (PubMed:10924127, PubMed:7937808). Involved in the regulation of the endogenous content of polyunsaturated PI and PS lipids in the nervous system. Changes in these lipids extend to downstream metabolic products like PI phosphates PIP and PIP2, which play fundamental roles in cell biology (By similarity). Regulates mitochondrial morphology. These dynamic changes may be due to PA hydrolysis at the mitochondrial surface (By similarity). May play a regulatory role in spermatogenesis or sperm function (PubMed:7937808).</text>
</comment>
<comment type="catalytic activity">
    <reaction evidence="5 11 12">
        <text>a 1,2-diacyl-sn-glycero-3-phosphate + H2O = a 2-acyl-sn-glycerol 3-phosphate + a fatty acid + H(+)</text>
        <dbReference type="Rhea" id="RHEA:44648"/>
        <dbReference type="ChEBI" id="CHEBI:15377"/>
        <dbReference type="ChEBI" id="CHEBI:15378"/>
        <dbReference type="ChEBI" id="CHEBI:28868"/>
        <dbReference type="ChEBI" id="CHEBI:58608"/>
        <dbReference type="ChEBI" id="CHEBI:64982"/>
        <dbReference type="EC" id="3.1.1.118"/>
    </reaction>
    <physiologicalReaction direction="left-to-right" evidence="5 11 12">
        <dbReference type="Rhea" id="RHEA:44649"/>
    </physiologicalReaction>
</comment>
<comment type="catalytic activity">
    <reaction evidence="2">
        <text>a 1,2-diacyl-sn-glycero-3-phospho-(1D-myo-inositol) + H2O = a 2-acyl-sn-glycero-3-phospho-D-myo-inositol + a fatty acid + H(+)</text>
        <dbReference type="Rhea" id="RHEA:35263"/>
        <dbReference type="ChEBI" id="CHEBI:15377"/>
        <dbReference type="ChEBI" id="CHEBI:15378"/>
        <dbReference type="ChEBI" id="CHEBI:28868"/>
        <dbReference type="ChEBI" id="CHEBI:57880"/>
        <dbReference type="ChEBI" id="CHEBI:64872"/>
        <dbReference type="EC" id="3.1.1.118"/>
    </reaction>
    <physiologicalReaction direction="left-to-right" evidence="2">
        <dbReference type="Rhea" id="RHEA:35264"/>
    </physiologicalReaction>
</comment>
<comment type="catalytic activity">
    <reaction evidence="2">
        <text>1-octadecanoyl-2-(5Z,8Z,11Z,14Z-eicosatetraenoyl)-sn-glycero-3-phospho-(1D-myo-inositol) + H2O = 2-(5Z,8Z,11Z,14Z-eicosatetraenoyl)-sn-glycero-3-phospho-(1D-myo-inositol) + octadecanoate + H(+)</text>
        <dbReference type="Rhea" id="RHEA:73967"/>
        <dbReference type="ChEBI" id="CHEBI:15377"/>
        <dbReference type="ChEBI" id="CHEBI:15378"/>
        <dbReference type="ChEBI" id="CHEBI:25629"/>
        <dbReference type="ChEBI" id="CHEBI:133606"/>
        <dbReference type="ChEBI" id="CHEBI:193055"/>
    </reaction>
    <physiologicalReaction direction="left-to-right" evidence="2">
        <dbReference type="Rhea" id="RHEA:73968"/>
    </physiologicalReaction>
</comment>
<comment type="catalytic activity">
    <reaction evidence="2">
        <text>a 1-acyl-2-(5Z,8Z,11Z,14Z-eicosatetraenoyl)-sn-glycero-3-phospho-(1D-myo-inositol) + H2O = 2-(5Z,8Z,11Z,14Z-eicosatetraenoyl)-sn-glycero-3-phospho-(1D-myo-inositol) + a fatty acid + H(+)</text>
        <dbReference type="Rhea" id="RHEA:73971"/>
        <dbReference type="ChEBI" id="CHEBI:15377"/>
        <dbReference type="ChEBI" id="CHEBI:15378"/>
        <dbReference type="ChEBI" id="CHEBI:28868"/>
        <dbReference type="ChEBI" id="CHEBI:75243"/>
        <dbReference type="ChEBI" id="CHEBI:193055"/>
    </reaction>
    <physiologicalReaction direction="left-to-right" evidence="2">
        <dbReference type="Rhea" id="RHEA:73972"/>
    </physiologicalReaction>
</comment>
<comment type="catalytic activity">
    <reaction evidence="1">
        <text>1,2-dihexadecanoyl-sn-glycero-3-phospho-(1D-myo-inositol) + H2O = 2-hexadecanoyl-sn-glycero-3-phospho-(1D-myo-inositol) + hexadecanoate + H(+)</text>
        <dbReference type="Rhea" id="RHEA:66708"/>
        <dbReference type="ChEBI" id="CHEBI:7896"/>
        <dbReference type="ChEBI" id="CHEBI:15377"/>
        <dbReference type="ChEBI" id="CHEBI:15378"/>
        <dbReference type="ChEBI" id="CHEBI:72835"/>
        <dbReference type="ChEBI" id="CHEBI:167448"/>
    </reaction>
    <physiologicalReaction direction="left-to-right" evidence="1">
        <dbReference type="Rhea" id="RHEA:66709"/>
    </physiologicalReaction>
</comment>
<comment type="catalytic activity">
    <reaction evidence="5 11 12">
        <text>1,2-di-(9Z-octadecenoyl)-sn-glycero-3-phosphate + H2O = 2-(9Z-octadecenoyl)-sn-glycero-3-phosphate + (9Z)-octadecenoate + H(+)</text>
        <dbReference type="Rhea" id="RHEA:45128"/>
        <dbReference type="ChEBI" id="CHEBI:15377"/>
        <dbReference type="ChEBI" id="CHEBI:15378"/>
        <dbReference type="ChEBI" id="CHEBI:30823"/>
        <dbReference type="ChEBI" id="CHEBI:74546"/>
        <dbReference type="ChEBI" id="CHEBI:77593"/>
    </reaction>
    <physiologicalReaction direction="left-to-right" evidence="5 11 12">
        <dbReference type="Rhea" id="RHEA:45129"/>
    </physiologicalReaction>
</comment>
<comment type="catalytic activity">
    <reaction evidence="11">
        <text>a 1-acyl-2-(5Z,8Z,11Z,14Z)-eicosatetraenoyl-sn-glycero-3-phosphate + H2O = 2-(5Z,8Z,11Z,14Z-eicosatetraenoyl)-sn-glycero-3-phosphate + a fatty acid + H(+)</text>
        <dbReference type="Rhea" id="RHEA:73975"/>
        <dbReference type="ChEBI" id="CHEBI:15377"/>
        <dbReference type="ChEBI" id="CHEBI:15378"/>
        <dbReference type="ChEBI" id="CHEBI:28868"/>
        <dbReference type="ChEBI" id="CHEBI:74922"/>
        <dbReference type="ChEBI" id="CHEBI:78209"/>
    </reaction>
    <physiologicalReaction direction="left-to-right" evidence="11">
        <dbReference type="Rhea" id="RHEA:73976"/>
    </physiologicalReaction>
</comment>
<comment type="catalytic activity">
    <reaction evidence="5 11">
        <text>1-hexadecanoyl-2-(9Z-octadecenoyl)-sn-glycero-3-phosphate + H2O = 2-(9Z-octadecenoyl)-sn-glycero-3-phosphate + hexadecanoate + H(+)</text>
        <dbReference type="Rhea" id="RHEA:40943"/>
        <dbReference type="ChEBI" id="CHEBI:7896"/>
        <dbReference type="ChEBI" id="CHEBI:15377"/>
        <dbReference type="ChEBI" id="CHEBI:15378"/>
        <dbReference type="ChEBI" id="CHEBI:64839"/>
        <dbReference type="ChEBI" id="CHEBI:77593"/>
    </reaction>
    <physiologicalReaction direction="left-to-right" evidence="5 11">
        <dbReference type="Rhea" id="RHEA:40944"/>
    </physiologicalReaction>
</comment>
<comment type="catalytic activity">
    <reaction evidence="1">
        <text>1-hexadecanoyl-2-(9Z-octadecenoyl)-sn-glycero-3-phospho-L-serine + H2O = 2-(9Z-octadecenoyl)-sn-glycero-3-phospho-L-serine + hexadecanoate + H(+)</text>
        <dbReference type="Rhea" id="RHEA:43968"/>
        <dbReference type="ChEBI" id="CHEBI:7896"/>
        <dbReference type="ChEBI" id="CHEBI:15377"/>
        <dbReference type="ChEBI" id="CHEBI:15378"/>
        <dbReference type="ChEBI" id="CHEBI:75029"/>
        <dbReference type="ChEBI" id="CHEBI:77342"/>
    </reaction>
    <physiologicalReaction direction="left-to-right" evidence="1">
        <dbReference type="Rhea" id="RHEA:43969"/>
    </physiologicalReaction>
</comment>
<comment type="catalytic activity">
    <reaction evidence="11">
        <text>1,2-di-(5Z,8Z,11Z,14Z)-eicosatetraenoyl-sn-glycero-3-phosphate + H2O = 2-(5Z,8Z,11Z,14Z-eicosatetraenoyl)-sn-glycero-3-phosphate + (5Z,8Z,11Z,14Z)-eicosatetraenoate + H(+)</text>
        <dbReference type="Rhea" id="RHEA:74159"/>
        <dbReference type="ChEBI" id="CHEBI:15377"/>
        <dbReference type="ChEBI" id="CHEBI:15378"/>
        <dbReference type="ChEBI" id="CHEBI:32395"/>
        <dbReference type="ChEBI" id="CHEBI:77126"/>
        <dbReference type="ChEBI" id="CHEBI:78209"/>
    </reaction>
    <physiologicalReaction direction="left-to-right" evidence="11">
        <dbReference type="Rhea" id="RHEA:74160"/>
    </physiologicalReaction>
</comment>
<comment type="catalytic activity">
    <reaction evidence="11">
        <text>1-octadecanoyl-2-(5Z,8Z,11Z,14Z-eicosatetraenoyl)-sn-glycero-3-phosphate + H2O = 2-(5Z,8Z,11Z,14Z-eicosatetraenoyl)-sn-glycero-3-phosphate + octadecanoate + H(+)</text>
        <dbReference type="Rhea" id="RHEA:74163"/>
        <dbReference type="ChEBI" id="CHEBI:15377"/>
        <dbReference type="ChEBI" id="CHEBI:15378"/>
        <dbReference type="ChEBI" id="CHEBI:25629"/>
        <dbReference type="ChEBI" id="CHEBI:77091"/>
        <dbReference type="ChEBI" id="CHEBI:78209"/>
    </reaction>
    <physiologicalReaction direction="left-to-right" evidence="11">
        <dbReference type="Rhea" id="RHEA:74164"/>
    </physiologicalReaction>
</comment>
<comment type="catalytic activity">
    <reaction evidence="2">
        <text>a 1,2-diacyl-sn-glycero-3-phosphocholine + H2O = a 2-acyl-sn-glycero-3-phosphocholine + a fatty acid + H(+)</text>
        <dbReference type="Rhea" id="RHEA:18689"/>
        <dbReference type="ChEBI" id="CHEBI:15377"/>
        <dbReference type="ChEBI" id="CHEBI:15378"/>
        <dbReference type="ChEBI" id="CHEBI:28868"/>
        <dbReference type="ChEBI" id="CHEBI:57643"/>
        <dbReference type="ChEBI" id="CHEBI:57875"/>
        <dbReference type="EC" id="3.1.1.32"/>
    </reaction>
    <physiologicalReaction direction="left-to-right" evidence="2">
        <dbReference type="Rhea" id="RHEA:18690"/>
    </physiologicalReaction>
</comment>
<comment type="catalytic activity">
    <reaction evidence="2">
        <text>a 1,2-diacyl-sn-glycero-3-phosphoethanolamine + H2O = a 2-acyl-sn-glycero-3-phosphoethanolamine + a fatty acid + H(+)</text>
        <dbReference type="Rhea" id="RHEA:44408"/>
        <dbReference type="ChEBI" id="CHEBI:15377"/>
        <dbReference type="ChEBI" id="CHEBI:15378"/>
        <dbReference type="ChEBI" id="CHEBI:28868"/>
        <dbReference type="ChEBI" id="CHEBI:64612"/>
        <dbReference type="ChEBI" id="CHEBI:65213"/>
    </reaction>
    <physiologicalReaction direction="left-to-right" evidence="2">
        <dbReference type="Rhea" id="RHEA:44409"/>
    </physiologicalReaction>
</comment>
<comment type="catalytic activity">
    <reaction evidence="1">
        <text>a 1,2-diacyl-sn-glycero-3-phospho-L-serine + H2O = a 2-acyl-sn-glycero-3-phospho-L-serine + a fatty acid + H(+)</text>
        <dbReference type="Rhea" id="RHEA:42212"/>
        <dbReference type="ChEBI" id="CHEBI:15377"/>
        <dbReference type="ChEBI" id="CHEBI:15378"/>
        <dbReference type="ChEBI" id="CHEBI:28868"/>
        <dbReference type="ChEBI" id="CHEBI:57262"/>
        <dbReference type="ChEBI" id="CHEBI:65214"/>
        <dbReference type="EC" id="3.1.1.111"/>
    </reaction>
    <physiologicalReaction direction="left-to-right" evidence="1">
        <dbReference type="Rhea" id="RHEA:42213"/>
    </physiologicalReaction>
</comment>
<comment type="catalytic activity">
    <reaction evidence="1">
        <text>a 1,2-diacyl-sn-glycero-3-phospho-(1'-sn-glycerol) + H2O = 2-acyl-sn-glycero-3-phospho-(1'-sn-glycerol) + a fatty acid + H(+)</text>
        <dbReference type="Rhea" id="RHEA:67428"/>
        <dbReference type="ChEBI" id="CHEBI:15377"/>
        <dbReference type="ChEBI" id="CHEBI:15378"/>
        <dbReference type="ChEBI" id="CHEBI:28868"/>
        <dbReference type="ChEBI" id="CHEBI:64716"/>
        <dbReference type="ChEBI" id="CHEBI:76528"/>
    </reaction>
    <physiologicalReaction direction="left-to-right" evidence="1">
        <dbReference type="Rhea" id="RHEA:67429"/>
    </physiologicalReaction>
</comment>
<comment type="catalytic activity">
    <reaction evidence="1">
        <text>1-hexadecanoyl-2-(9Z-octadecenoyl)-sn-glycero-3-phospho-(1'-sn-glycerol) + H2O = 2-(9Z-octadecenoyl)-sn-glycero-3-phospho-(1'-sn-glycerol) + hexadecanoate + H(+)</text>
        <dbReference type="Rhea" id="RHEA:74103"/>
        <dbReference type="ChEBI" id="CHEBI:7896"/>
        <dbReference type="ChEBI" id="CHEBI:15377"/>
        <dbReference type="ChEBI" id="CHEBI:15378"/>
        <dbReference type="ChEBI" id="CHEBI:72841"/>
        <dbReference type="ChEBI" id="CHEBI:141490"/>
    </reaction>
    <physiologicalReaction direction="left-to-right" evidence="1">
        <dbReference type="Rhea" id="RHEA:74104"/>
    </physiologicalReaction>
</comment>
<comment type="catalytic activity">
    <reaction evidence="2">
        <text>1-acyl-2-(5Z,8Z,11Z,14Z-eicosatetraenoyl)-sn-glycero-3-phosphocholine + H2O = 2-(5Z,8Z,11Z,14Z)-eicosatetraenoyl-sn-glycero-3-phosphocholine + a fatty acid + H(+)</text>
        <dbReference type="Rhea" id="RHEA:74247"/>
        <dbReference type="ChEBI" id="CHEBI:15377"/>
        <dbReference type="ChEBI" id="CHEBI:15378"/>
        <dbReference type="ChEBI" id="CHEBI:28868"/>
        <dbReference type="ChEBI" id="CHEBI:75063"/>
        <dbReference type="ChEBI" id="CHEBI:76079"/>
    </reaction>
    <physiologicalReaction direction="left-to-right" evidence="2">
        <dbReference type="Rhea" id="RHEA:74248"/>
    </physiologicalReaction>
</comment>
<comment type="catalytic activity">
    <reaction evidence="2">
        <text>1-acyl-2-(5Z,8Z,11Z,14Z)-eicosatetraenoyl-sn-glycero-3-phosphoethanolamine + H2O = 2-(5Z,8Z,11Z,14Z)-eicosatetraenoyl-sn-glycero-3-phosphoethanolamine + a fatty acid + H(+)</text>
        <dbReference type="Rhea" id="RHEA:74251"/>
        <dbReference type="ChEBI" id="CHEBI:15377"/>
        <dbReference type="ChEBI" id="CHEBI:15378"/>
        <dbReference type="ChEBI" id="CHEBI:28868"/>
        <dbReference type="ChEBI" id="CHEBI:75067"/>
        <dbReference type="ChEBI" id="CHEBI:76091"/>
    </reaction>
    <physiologicalReaction direction="left-to-right" evidence="2">
        <dbReference type="Rhea" id="RHEA:74252"/>
    </physiologicalReaction>
</comment>
<comment type="catalytic activity">
    <reaction evidence="2">
        <text>1-(9Z-octadecenoyl)-2-(7Z,10Z,13Z,16Z,19Z-docosapentaenoyl)-sn-glycero-3-phospho-1D-myo-inositol + H2O = 2-(7Z,10Z,13Z,16Z,19Z-docosapentaenoyl)-sn-glycero-3-phospho-1D-myo-inositol + (9Z)-octadecenoate + H(+)</text>
        <dbReference type="Rhea" id="RHEA:76971"/>
        <dbReference type="ChEBI" id="CHEBI:15377"/>
        <dbReference type="ChEBI" id="CHEBI:15378"/>
        <dbReference type="ChEBI" id="CHEBI:30823"/>
        <dbReference type="ChEBI" id="CHEBI:195484"/>
        <dbReference type="ChEBI" id="CHEBI:195486"/>
    </reaction>
    <physiologicalReaction direction="left-to-right" evidence="2">
        <dbReference type="Rhea" id="RHEA:76972"/>
    </physiologicalReaction>
</comment>
<comment type="catalytic activity">
    <reaction evidence="2">
        <text>1-(9Z-octadecenoyl)-2-(5Z,8Z,11Z,14Z-eicosatetraenoyl)-sn-glycero-3-phospho-1D-myo-inositol + H2O = 2-(5Z,8Z,11Z,14Z-eicosatetraenoyl)-sn-glycero-3-phospho-(1D-myo-inositol) + (9Z)-octadecenoate + H(+)</text>
        <dbReference type="Rhea" id="RHEA:76975"/>
        <dbReference type="ChEBI" id="CHEBI:15377"/>
        <dbReference type="ChEBI" id="CHEBI:15378"/>
        <dbReference type="ChEBI" id="CHEBI:30823"/>
        <dbReference type="ChEBI" id="CHEBI:78765"/>
        <dbReference type="ChEBI" id="CHEBI:193055"/>
    </reaction>
    <physiologicalReaction direction="left-to-right" evidence="2">
        <dbReference type="Rhea" id="RHEA:76976"/>
    </physiologicalReaction>
</comment>
<comment type="catalytic activity">
    <reaction evidence="2">
        <text>1,2-di-(9Z-octadecenoyl)-sn-glycero-3-phospho-1D-myo-inositol + H2O = 2-(9Z-octadecenoyl)-sn-glycero-3-phospho-1D-myo-inositol + (9Z)-octadecenoate + H(+)</text>
        <dbReference type="Rhea" id="RHEA:76979"/>
        <dbReference type="ChEBI" id="CHEBI:15377"/>
        <dbReference type="ChEBI" id="CHEBI:15378"/>
        <dbReference type="ChEBI" id="CHEBI:30823"/>
        <dbReference type="ChEBI" id="CHEBI:195485"/>
        <dbReference type="ChEBI" id="CHEBI:195487"/>
    </reaction>
    <physiologicalReaction direction="left-to-right" evidence="2">
        <dbReference type="Rhea" id="RHEA:76980"/>
    </physiologicalReaction>
</comment>
<comment type="catalytic activity">
    <reaction evidence="2">
        <text>1-(9Z-octadecenoyl)-2-(8Z,11Z,14Z-eicosatrienoyl)-sn-glycero-3-phospho-1D-myo-inositol + H2O = 2-(8Z,11Z,14Z-eicosatrienoyl)-sn-glycero-3-phospho-1D-myo-inositol + (9Z)-octadecenoate + H(+)</text>
        <dbReference type="Rhea" id="RHEA:76983"/>
        <dbReference type="ChEBI" id="CHEBI:15377"/>
        <dbReference type="ChEBI" id="CHEBI:15378"/>
        <dbReference type="ChEBI" id="CHEBI:30823"/>
        <dbReference type="ChEBI" id="CHEBI:195488"/>
        <dbReference type="ChEBI" id="CHEBI:195489"/>
    </reaction>
    <physiologicalReaction direction="left-to-right" evidence="2">
        <dbReference type="Rhea" id="RHEA:76984"/>
    </physiologicalReaction>
</comment>
<comment type="catalytic activity">
    <reaction evidence="1">
        <text>1,2-di-(9Z-octadecenoyl)-sn-glycero-3-phosphocholine + H2O = (9Z-octadecenoyl)-sn-glycero-3-phosphocholine + (9Z)-octadecenoate + H(+)</text>
        <dbReference type="Rhea" id="RHEA:38699"/>
        <dbReference type="ChEBI" id="CHEBI:15377"/>
        <dbReference type="ChEBI" id="CHEBI:15378"/>
        <dbReference type="ChEBI" id="CHEBI:30823"/>
        <dbReference type="ChEBI" id="CHEBI:74669"/>
        <dbReference type="ChEBI" id="CHEBI:76083"/>
    </reaction>
    <physiologicalReaction direction="left-to-right" evidence="1">
        <dbReference type="Rhea" id="RHEA:38700"/>
    </physiologicalReaction>
</comment>
<comment type="pathway">
    <text evidence="2">Phospholipid metabolism; phosphatidylinositol metabolism.</text>
</comment>
<comment type="subunit">
    <text evidence="2">Forms homooligomers and, to a much smaller extent, heterooligomers with DDHD2. Interacts with SEC23A and SEC24C.</text>
</comment>
<comment type="subcellular location">
    <subcellularLocation>
        <location evidence="2">Cytoplasm</location>
    </subcellularLocation>
</comment>
<comment type="alternative products">
    <event type="alternative splicing"/>
    <isoform>
        <id>O46606-1</id>
        <name>1</name>
        <sequence type="displayed"/>
    </isoform>
    <isoform>
        <id>O46606-2</id>
        <name>2</name>
        <sequence type="described" ref="VSP_008627"/>
    </isoform>
</comment>
<comment type="tissue specificity">
    <text evidence="7">Expressed in mature testis.</text>
</comment>
<comment type="mass spectrometry">
    <molecule>Isoform 2</molecule>
    <text>The measured range is 1-835.</text>
</comment>
<comment type="similarity">
    <text evidence="10">Belongs to the PA-PLA1 family.</text>
</comment>